<reference key="1">
    <citation type="journal article" date="2001" name="Nature">
        <title>Complete genome sequence of a multiple drug resistant Salmonella enterica serovar Typhi CT18.</title>
        <authorList>
            <person name="Parkhill J."/>
            <person name="Dougan G."/>
            <person name="James K.D."/>
            <person name="Thomson N.R."/>
            <person name="Pickard D."/>
            <person name="Wain J."/>
            <person name="Churcher C.M."/>
            <person name="Mungall K.L."/>
            <person name="Bentley S.D."/>
            <person name="Holden M.T.G."/>
            <person name="Sebaihia M."/>
            <person name="Baker S."/>
            <person name="Basham D."/>
            <person name="Brooks K."/>
            <person name="Chillingworth T."/>
            <person name="Connerton P."/>
            <person name="Cronin A."/>
            <person name="Davis P."/>
            <person name="Davies R.M."/>
            <person name="Dowd L."/>
            <person name="White N."/>
            <person name="Farrar J."/>
            <person name="Feltwell T."/>
            <person name="Hamlin N."/>
            <person name="Haque A."/>
            <person name="Hien T.T."/>
            <person name="Holroyd S."/>
            <person name="Jagels K."/>
            <person name="Krogh A."/>
            <person name="Larsen T.S."/>
            <person name="Leather S."/>
            <person name="Moule S."/>
            <person name="O'Gaora P."/>
            <person name="Parry C."/>
            <person name="Quail M.A."/>
            <person name="Rutherford K.M."/>
            <person name="Simmonds M."/>
            <person name="Skelton J."/>
            <person name="Stevens K."/>
            <person name="Whitehead S."/>
            <person name="Barrell B.G."/>
        </authorList>
    </citation>
    <scope>NUCLEOTIDE SEQUENCE [LARGE SCALE GENOMIC DNA]</scope>
    <source>
        <strain>CT18</strain>
    </source>
</reference>
<reference key="2">
    <citation type="journal article" date="2003" name="J. Bacteriol.">
        <title>Comparative genomics of Salmonella enterica serovar Typhi strains Ty2 and CT18.</title>
        <authorList>
            <person name="Deng W."/>
            <person name="Liou S.-R."/>
            <person name="Plunkett G. III"/>
            <person name="Mayhew G.F."/>
            <person name="Rose D.J."/>
            <person name="Burland V."/>
            <person name="Kodoyianni V."/>
            <person name="Schwartz D.C."/>
            <person name="Blattner F.R."/>
        </authorList>
    </citation>
    <scope>NUCLEOTIDE SEQUENCE [LARGE SCALE GENOMIC DNA]</scope>
    <source>
        <strain>ATCC 700931 / Ty2</strain>
    </source>
</reference>
<evidence type="ECO:0000250" key="1"/>
<evidence type="ECO:0000255" key="2">
    <source>
        <dbReference type="HAMAP-Rule" id="MF_00531"/>
    </source>
</evidence>
<evidence type="ECO:0000305" key="3"/>
<name>RS19_SALTI</name>
<keyword id="KW-0687">Ribonucleoprotein</keyword>
<keyword id="KW-0689">Ribosomal protein</keyword>
<keyword id="KW-0694">RNA-binding</keyword>
<keyword id="KW-0699">rRNA-binding</keyword>
<protein>
    <recommendedName>
        <fullName evidence="2">Small ribosomal subunit protein uS19</fullName>
    </recommendedName>
    <alternativeName>
        <fullName evidence="3">30S ribosomal protein S19</fullName>
    </alternativeName>
</protein>
<proteinExistence type="inferred from homology"/>
<accession>P66492</accession>
<accession>Q8XGF2</accession>
<sequence length="92" mass="10416">MPRSLKKGPFIDLHLLKKVEKAVESGDKKPLRTWSRRSTIFPNMIGLTIAVHNGRQHVPVFVSDEMVGHKLGEFAPTRTYRGHAADKKAKKK</sequence>
<dbReference type="EMBL" id="AL513382">
    <property type="protein sequence ID" value="CAD08177.1"/>
    <property type="molecule type" value="Genomic_DNA"/>
</dbReference>
<dbReference type="EMBL" id="AE014613">
    <property type="protein sequence ID" value="AAO71536.1"/>
    <property type="molecule type" value="Genomic_DNA"/>
</dbReference>
<dbReference type="RefSeq" id="NP_458464.1">
    <property type="nucleotide sequence ID" value="NC_003198.1"/>
</dbReference>
<dbReference type="RefSeq" id="WP_001138115.1">
    <property type="nucleotide sequence ID" value="NZ_WSUR01000046.1"/>
</dbReference>
<dbReference type="SMR" id="P66492"/>
<dbReference type="STRING" id="220341.gene:17588190"/>
<dbReference type="GeneID" id="97603665"/>
<dbReference type="KEGG" id="stt:t4069"/>
<dbReference type="KEGG" id="sty:STY4362"/>
<dbReference type="PATRIC" id="fig|220341.7.peg.4458"/>
<dbReference type="eggNOG" id="COG0185">
    <property type="taxonomic scope" value="Bacteria"/>
</dbReference>
<dbReference type="HOGENOM" id="CLU_144911_0_1_6"/>
<dbReference type="OMA" id="KGPFVDP"/>
<dbReference type="OrthoDB" id="9797833at2"/>
<dbReference type="Proteomes" id="UP000000541">
    <property type="component" value="Chromosome"/>
</dbReference>
<dbReference type="Proteomes" id="UP000002670">
    <property type="component" value="Chromosome"/>
</dbReference>
<dbReference type="GO" id="GO:0005737">
    <property type="term" value="C:cytoplasm"/>
    <property type="evidence" value="ECO:0007669"/>
    <property type="project" value="UniProtKB-ARBA"/>
</dbReference>
<dbReference type="GO" id="GO:0015935">
    <property type="term" value="C:small ribosomal subunit"/>
    <property type="evidence" value="ECO:0007669"/>
    <property type="project" value="InterPro"/>
</dbReference>
<dbReference type="GO" id="GO:0019843">
    <property type="term" value="F:rRNA binding"/>
    <property type="evidence" value="ECO:0007669"/>
    <property type="project" value="UniProtKB-UniRule"/>
</dbReference>
<dbReference type="GO" id="GO:0003735">
    <property type="term" value="F:structural constituent of ribosome"/>
    <property type="evidence" value="ECO:0007669"/>
    <property type="project" value="InterPro"/>
</dbReference>
<dbReference type="GO" id="GO:0000028">
    <property type="term" value="P:ribosomal small subunit assembly"/>
    <property type="evidence" value="ECO:0007669"/>
    <property type="project" value="TreeGrafter"/>
</dbReference>
<dbReference type="GO" id="GO:0006412">
    <property type="term" value="P:translation"/>
    <property type="evidence" value="ECO:0007669"/>
    <property type="project" value="UniProtKB-UniRule"/>
</dbReference>
<dbReference type="FunFam" id="3.30.860.10:FF:000001">
    <property type="entry name" value="30S ribosomal protein S19"/>
    <property type="match status" value="1"/>
</dbReference>
<dbReference type="Gene3D" id="3.30.860.10">
    <property type="entry name" value="30s Ribosomal Protein S19, Chain A"/>
    <property type="match status" value="1"/>
</dbReference>
<dbReference type="HAMAP" id="MF_00531">
    <property type="entry name" value="Ribosomal_uS19"/>
    <property type="match status" value="1"/>
</dbReference>
<dbReference type="InterPro" id="IPR002222">
    <property type="entry name" value="Ribosomal_uS19"/>
</dbReference>
<dbReference type="InterPro" id="IPR005732">
    <property type="entry name" value="Ribosomal_uS19_bac-type"/>
</dbReference>
<dbReference type="InterPro" id="IPR020934">
    <property type="entry name" value="Ribosomal_uS19_CS"/>
</dbReference>
<dbReference type="InterPro" id="IPR023575">
    <property type="entry name" value="Ribosomal_uS19_SF"/>
</dbReference>
<dbReference type="NCBIfam" id="TIGR01050">
    <property type="entry name" value="rpsS_bact"/>
    <property type="match status" value="1"/>
</dbReference>
<dbReference type="PANTHER" id="PTHR11880">
    <property type="entry name" value="RIBOSOMAL PROTEIN S19P FAMILY MEMBER"/>
    <property type="match status" value="1"/>
</dbReference>
<dbReference type="PANTHER" id="PTHR11880:SF8">
    <property type="entry name" value="SMALL RIBOSOMAL SUBUNIT PROTEIN US19M"/>
    <property type="match status" value="1"/>
</dbReference>
<dbReference type="Pfam" id="PF00203">
    <property type="entry name" value="Ribosomal_S19"/>
    <property type="match status" value="1"/>
</dbReference>
<dbReference type="PIRSF" id="PIRSF002144">
    <property type="entry name" value="Ribosomal_S19"/>
    <property type="match status" value="1"/>
</dbReference>
<dbReference type="PRINTS" id="PR00975">
    <property type="entry name" value="RIBOSOMALS19"/>
</dbReference>
<dbReference type="SUPFAM" id="SSF54570">
    <property type="entry name" value="Ribosomal protein S19"/>
    <property type="match status" value="1"/>
</dbReference>
<dbReference type="PROSITE" id="PS00323">
    <property type="entry name" value="RIBOSOMAL_S19"/>
    <property type="match status" value="1"/>
</dbReference>
<gene>
    <name evidence="2" type="primary">rpsS</name>
    <name type="ordered locus">STY4362</name>
    <name type="ordered locus">t4069</name>
</gene>
<organism>
    <name type="scientific">Salmonella typhi</name>
    <dbReference type="NCBI Taxonomy" id="90370"/>
    <lineage>
        <taxon>Bacteria</taxon>
        <taxon>Pseudomonadati</taxon>
        <taxon>Pseudomonadota</taxon>
        <taxon>Gammaproteobacteria</taxon>
        <taxon>Enterobacterales</taxon>
        <taxon>Enterobacteriaceae</taxon>
        <taxon>Salmonella</taxon>
    </lineage>
</organism>
<feature type="initiator methionine" description="Removed" evidence="1">
    <location>
        <position position="1"/>
    </location>
</feature>
<feature type="chain" id="PRO_0000129895" description="Small ribosomal subunit protein uS19">
    <location>
        <begin position="2"/>
        <end position="92"/>
    </location>
</feature>
<comment type="function">
    <text evidence="2">Protein S19 forms a complex with S13 that binds strongly to the 16S ribosomal RNA.</text>
</comment>
<comment type="similarity">
    <text evidence="2">Belongs to the universal ribosomal protein uS19 family.</text>
</comment>